<organism>
    <name type="scientific">Staphylococcus carnosus (strain TM300)</name>
    <dbReference type="NCBI Taxonomy" id="396513"/>
    <lineage>
        <taxon>Bacteria</taxon>
        <taxon>Bacillati</taxon>
        <taxon>Bacillota</taxon>
        <taxon>Bacilli</taxon>
        <taxon>Bacillales</taxon>
        <taxon>Staphylococcaceae</taxon>
        <taxon>Staphylococcus</taxon>
    </lineage>
</organism>
<name>RL15_STACT</name>
<protein>
    <recommendedName>
        <fullName evidence="1">Large ribosomal subunit protein uL15</fullName>
    </recommendedName>
    <alternativeName>
        <fullName evidence="3">50S ribosomal protein L15</fullName>
    </alternativeName>
</protein>
<keyword id="KW-1185">Reference proteome</keyword>
<keyword id="KW-0687">Ribonucleoprotein</keyword>
<keyword id="KW-0689">Ribosomal protein</keyword>
<keyword id="KW-0694">RNA-binding</keyword>
<keyword id="KW-0699">rRNA-binding</keyword>
<comment type="function">
    <text evidence="1">Binds to the 23S rRNA.</text>
</comment>
<comment type="subunit">
    <text evidence="1">Part of the 50S ribosomal subunit.</text>
</comment>
<comment type="similarity">
    <text evidence="1">Belongs to the universal ribosomal protein uL15 family.</text>
</comment>
<accession>P35139</accession>
<accession>B9DM28</accession>
<gene>
    <name evidence="1" type="primary">rplO</name>
    <name type="ordered locus">Sca_1716</name>
</gene>
<proteinExistence type="inferred from homology"/>
<dbReference type="EMBL" id="AM295250">
    <property type="protein sequence ID" value="CAL28622.1"/>
    <property type="molecule type" value="Genomic_DNA"/>
</dbReference>
<dbReference type="EMBL" id="X70086">
    <property type="status" value="NOT_ANNOTATED_CDS"/>
    <property type="molecule type" value="Genomic_DNA"/>
</dbReference>
<dbReference type="PIR" id="S34406">
    <property type="entry name" value="S34406"/>
</dbReference>
<dbReference type="RefSeq" id="WP_015900960.1">
    <property type="nucleotide sequence ID" value="NC_012121.1"/>
</dbReference>
<dbReference type="SMR" id="P35139"/>
<dbReference type="GeneID" id="93794175"/>
<dbReference type="KEGG" id="sca:SCA_1716"/>
<dbReference type="eggNOG" id="COG0200">
    <property type="taxonomic scope" value="Bacteria"/>
</dbReference>
<dbReference type="HOGENOM" id="CLU_055188_4_2_9"/>
<dbReference type="OrthoDB" id="9810293at2"/>
<dbReference type="BioCyc" id="SCAR396513:SCA_RS08745-MONOMER"/>
<dbReference type="Proteomes" id="UP000000444">
    <property type="component" value="Chromosome"/>
</dbReference>
<dbReference type="GO" id="GO:0022625">
    <property type="term" value="C:cytosolic large ribosomal subunit"/>
    <property type="evidence" value="ECO:0007669"/>
    <property type="project" value="TreeGrafter"/>
</dbReference>
<dbReference type="GO" id="GO:0019843">
    <property type="term" value="F:rRNA binding"/>
    <property type="evidence" value="ECO:0007669"/>
    <property type="project" value="UniProtKB-UniRule"/>
</dbReference>
<dbReference type="GO" id="GO:0003735">
    <property type="term" value="F:structural constituent of ribosome"/>
    <property type="evidence" value="ECO:0007669"/>
    <property type="project" value="InterPro"/>
</dbReference>
<dbReference type="GO" id="GO:0006412">
    <property type="term" value="P:translation"/>
    <property type="evidence" value="ECO:0007669"/>
    <property type="project" value="UniProtKB-UniRule"/>
</dbReference>
<dbReference type="FunFam" id="3.100.10.10:FF:000004">
    <property type="entry name" value="50S ribosomal protein L15"/>
    <property type="match status" value="1"/>
</dbReference>
<dbReference type="Gene3D" id="3.100.10.10">
    <property type="match status" value="1"/>
</dbReference>
<dbReference type="HAMAP" id="MF_01341">
    <property type="entry name" value="Ribosomal_uL15"/>
    <property type="match status" value="1"/>
</dbReference>
<dbReference type="InterPro" id="IPR030878">
    <property type="entry name" value="Ribosomal_uL15"/>
</dbReference>
<dbReference type="InterPro" id="IPR021131">
    <property type="entry name" value="Ribosomal_uL15/eL18"/>
</dbReference>
<dbReference type="InterPro" id="IPR036227">
    <property type="entry name" value="Ribosomal_uL15/eL18_sf"/>
</dbReference>
<dbReference type="InterPro" id="IPR005749">
    <property type="entry name" value="Ribosomal_uL15_bac-type"/>
</dbReference>
<dbReference type="InterPro" id="IPR001196">
    <property type="entry name" value="Ribosomal_uL15_CS"/>
</dbReference>
<dbReference type="NCBIfam" id="TIGR01071">
    <property type="entry name" value="rplO_bact"/>
    <property type="match status" value="1"/>
</dbReference>
<dbReference type="PANTHER" id="PTHR12934">
    <property type="entry name" value="50S RIBOSOMAL PROTEIN L15"/>
    <property type="match status" value="1"/>
</dbReference>
<dbReference type="PANTHER" id="PTHR12934:SF11">
    <property type="entry name" value="LARGE RIBOSOMAL SUBUNIT PROTEIN UL15M"/>
    <property type="match status" value="1"/>
</dbReference>
<dbReference type="Pfam" id="PF00828">
    <property type="entry name" value="Ribosomal_L27A"/>
    <property type="match status" value="1"/>
</dbReference>
<dbReference type="SUPFAM" id="SSF52080">
    <property type="entry name" value="Ribosomal proteins L15p and L18e"/>
    <property type="match status" value="1"/>
</dbReference>
<dbReference type="PROSITE" id="PS00475">
    <property type="entry name" value="RIBOSOMAL_L15"/>
    <property type="match status" value="1"/>
</dbReference>
<reference key="1">
    <citation type="journal article" date="2009" name="Appl. Environ. Microbiol.">
        <title>Genome analysis of the meat starter culture bacterium Staphylococcus carnosus TM300.</title>
        <authorList>
            <person name="Rosenstein R."/>
            <person name="Nerz C."/>
            <person name="Biswas L."/>
            <person name="Resch A."/>
            <person name="Raddatz G."/>
            <person name="Schuster S.C."/>
            <person name="Goetz F."/>
        </authorList>
    </citation>
    <scope>NUCLEOTIDE SEQUENCE [LARGE SCALE GENOMIC DNA]</scope>
    <source>
        <strain>TM300</strain>
    </source>
</reference>
<reference key="2">
    <citation type="journal article" date="1992" name="Mol. Gen. Genet.">
        <title>Cloning and molecular characterization of the secY genes from Bacillus licheniformis and Staphylococcus carnosus: comparative analysis of nine members of the SecY family.</title>
        <authorList>
            <person name="Tschauder S."/>
            <person name="Driessen A.J.M."/>
            <person name="Freudl R."/>
        </authorList>
    </citation>
    <scope>NUCLEOTIDE SEQUENCE [GENOMIC DNA] OF 59-146</scope>
</reference>
<sequence>MKLHELYPAEGSRKVRNRVGRGAATGNGKTSGRGQKGQKARSGGKVRPGFEGGQLPLFRRLPKRGFTNINRKEFAVVNLEQLNRFEEGTEVTPELLIETGVVKNAKAGIKVLGNGSLEKKLTVKAHNFSASAAEAIDAKGGAHEVI</sequence>
<evidence type="ECO:0000255" key="1">
    <source>
        <dbReference type="HAMAP-Rule" id="MF_01341"/>
    </source>
</evidence>
<evidence type="ECO:0000256" key="2">
    <source>
        <dbReference type="SAM" id="MobiDB-lite"/>
    </source>
</evidence>
<evidence type="ECO:0000305" key="3"/>
<feature type="chain" id="PRO_0000104814" description="Large ribosomal subunit protein uL15">
    <location>
        <begin position="1"/>
        <end position="146"/>
    </location>
</feature>
<feature type="region of interest" description="Disordered" evidence="2">
    <location>
        <begin position="1"/>
        <end position="55"/>
    </location>
</feature>
<feature type="compositionally biased region" description="Basic and acidic residues" evidence="2">
    <location>
        <begin position="1"/>
        <end position="13"/>
    </location>
</feature>
<feature type="compositionally biased region" description="Gly residues" evidence="2">
    <location>
        <begin position="23"/>
        <end position="35"/>
    </location>
</feature>
<feature type="sequence conflict" description="In Ref. 2; X70086." evidence="3" ref="2">
    <original>FAV</original>
    <variation>RQL</variation>
    <location>
        <begin position="74"/>
        <end position="76"/>
    </location>
</feature>